<proteinExistence type="evidence at protein level"/>
<sequence length="380" mass="43644">MGSSCRIECIFFSEFHPTLGPKITYQVPEDFISRELFDTVQVYIITKPELQNKLITVTAMEKKLIGCPVCIEHKKYSRNALLFNLGFVCDAQAKTCALEPIVKKLAGYLTTLELESSFVSNEESKQKLVPIMTILLEELNASGRCTLPIDESNTIHLKVIEQRPDPPVAQEYDVPVFTKDKEDFFSSQWDLTTQQILPYIDGFRHVQKISAEADVELNLVRIAIQNLLYYGVVTLVSILQYSNVYCPTPKVQDLVDDKSLQEACLSYVTKQGHKRASLRDVFQLYCSLSPGTTVRDLIGRHPQQLQHVDERKLIQFGLMKNLIRRLQKYPVRVSREERSHPARLYTGCHSYDEICCKTGMSYHELDERLENDPNIIICWK</sequence>
<evidence type="ECO:0000250" key="1">
    <source>
        <dbReference type="UniProtKB" id="Q8WTW4"/>
    </source>
</evidence>
<evidence type="ECO:0000269" key="2">
    <source>
    </source>
</evidence>
<evidence type="ECO:0000269" key="3">
    <source>
    </source>
</evidence>
<evidence type="ECO:0000269" key="4">
    <source>
    </source>
</evidence>
<evidence type="ECO:0000305" key="5"/>
<evidence type="ECO:0000312" key="6">
    <source>
        <dbReference type="EMBL" id="AAD33474.1"/>
    </source>
</evidence>
<evidence type="ECO:0000312" key="7">
    <source>
        <dbReference type="MGI" id="MGI:1914482"/>
    </source>
</evidence>
<comment type="function">
    <text evidence="1 2 3 4">Catalytic component of the GATOR1 complex, a multiprotein complex that functions as an inhibitor of the amino acid-sensing branch of the mTORC1 pathway (PubMed:26166573, PubMed:29768191, PubMed:38006878). In response to amino acid depletion, the GATOR1 complex has GTPase activating protein (GAP) activity and strongly increases GTP hydrolysis by RagA/RRAGA (or RagB/RRAGB) within heterodimeric Rag complexes, thereby turning them into their inactive GDP-bound form, releasing mTORC1 from lysosomal surface and inhibiting mTORC1 signaling (By similarity). In the presence of abundant amino acids, the GATOR1 complex is ubiquitinated and inhibited by GATOR2 (By similarity). Within the GATOR1 complex, NPRL2 constitutes the catalytic subunit that mediates the GTPase activator activity and under methionine-sufficient conditions, the GTPase activator activity is inhibited by PRMT1 through methylation and consequently inducing timely mTORC1 activation (PubMed:38006878).</text>
</comment>
<comment type="function">
    <text evidence="1">Suppresses Src-dependent tyrosine phosphorylation and activation of PDPK1 and its downstream signaling. Down-regulates PDPK1 kinase activity by interfering with tyrosine phosphorylation at 'Tyr-9', 'Tyr-373' and 'Tyr-376' residues. May act as a tumor suppressor. Suppresses cell growth and enhances sensitivity to various anticancer drugs.</text>
</comment>
<comment type="subunit">
    <text evidence="1">Within the GATOR complex, component of the GATOR1 subcomplex, made of DEPDC5, NPRL2 and NPRL3. GATOR1 mediates the strong interaction of the GATOR complex with small GTPases Rag (RagA/RRAGA, RagB/RRAGB, RagC/RRAGC and/or RagD/RRAGD) heterodimers. GATOR1 interacts with GPR155/LYCHOS; interaction takes place in presence of cholesterol and prevents interaction between GATOR1 and KICSTOR. Interacts with PDPK1.</text>
</comment>
<comment type="subcellular location">
    <subcellularLocation>
        <location evidence="1">Lysosome membrane</location>
    </subcellularLocation>
    <text evidence="1">Localization to lysosomes is mediated by the KICSTOR complex and is amino acid-independent.</text>
</comment>
<comment type="domain">
    <text evidence="1">The arginine finger is critical for the GTPase-activating mechanism.</text>
</comment>
<comment type="PTM">
    <text evidence="1">In the presence of abundant amino acids, ubiquitinated at Lys-158 and Lys-357 via 'Lys-6'-linked ubiquitination by the WDR24 component of the GATOR2 complex, thereby inhibiting the GATOR1 complex and promoting mTORC1 activation.</text>
</comment>
<comment type="PTM">
    <text evidence="4">Asymmetric dimethylation at Arg-78 by PRMT1 inhibits the GTPase activator activity of the GATOR1 complex and consequently inducing timely mTORC1 activation under methionine-sufficient conditions.</text>
</comment>
<comment type="disruption phenotype">
    <text evidence="2 3">Embryonic lethality due to defective fetal liver hematopoiesis (PubMed:26166573). Embryos also display reduced methionine levels (PubMed:26166573). Lysosomal acidification is impaired, leading to defective lysosomal processing of cobalamin and methionine synthase (PubMed:26166573). Conditional deletion in skeletal muscle causes constitutive activation of mTORC1 signaling: muscle fibers are significantly larger and show altered fiber-type composition, with more fast-twitch glycolytic and fewer slow-twitch oxidative fibers (PubMed:29768191). Mice with a conditional deletion in muscle also have altered running behavior and enhanced glucose tolerance (PubMed:29768191).</text>
</comment>
<comment type="similarity">
    <text evidence="5">Belongs to the NPR2 family.</text>
</comment>
<reference key="1">
    <citation type="submission" date="1999-02" db="EMBL/GenBank/DDBJ databases">
        <title>Mouse ortholog of human G21 gene.</title>
        <authorList>
            <person name="Duh F.-M."/>
            <person name="Minna J.D."/>
            <person name="Lerman M.I."/>
        </authorList>
    </citation>
    <scope>NUCLEOTIDE SEQUENCE [MRNA]</scope>
    <source>
        <strain>C57BL/6J</strain>
    </source>
</reference>
<reference key="2">
    <citation type="journal article" date="2005" name="Science">
        <title>The transcriptional landscape of the mammalian genome.</title>
        <authorList>
            <person name="Carninci P."/>
            <person name="Kasukawa T."/>
            <person name="Katayama S."/>
            <person name="Gough J."/>
            <person name="Frith M.C."/>
            <person name="Maeda N."/>
            <person name="Oyama R."/>
            <person name="Ravasi T."/>
            <person name="Lenhard B."/>
            <person name="Wells C."/>
            <person name="Kodzius R."/>
            <person name="Shimokawa K."/>
            <person name="Bajic V.B."/>
            <person name="Brenner S.E."/>
            <person name="Batalov S."/>
            <person name="Forrest A.R."/>
            <person name="Zavolan M."/>
            <person name="Davis M.J."/>
            <person name="Wilming L.G."/>
            <person name="Aidinis V."/>
            <person name="Allen J.E."/>
            <person name="Ambesi-Impiombato A."/>
            <person name="Apweiler R."/>
            <person name="Aturaliya R.N."/>
            <person name="Bailey T.L."/>
            <person name="Bansal M."/>
            <person name="Baxter L."/>
            <person name="Beisel K.W."/>
            <person name="Bersano T."/>
            <person name="Bono H."/>
            <person name="Chalk A.M."/>
            <person name="Chiu K.P."/>
            <person name="Choudhary V."/>
            <person name="Christoffels A."/>
            <person name="Clutterbuck D.R."/>
            <person name="Crowe M.L."/>
            <person name="Dalla E."/>
            <person name="Dalrymple B.P."/>
            <person name="de Bono B."/>
            <person name="Della Gatta G."/>
            <person name="di Bernardo D."/>
            <person name="Down T."/>
            <person name="Engstrom P."/>
            <person name="Fagiolini M."/>
            <person name="Faulkner G."/>
            <person name="Fletcher C.F."/>
            <person name="Fukushima T."/>
            <person name="Furuno M."/>
            <person name="Futaki S."/>
            <person name="Gariboldi M."/>
            <person name="Georgii-Hemming P."/>
            <person name="Gingeras T.R."/>
            <person name="Gojobori T."/>
            <person name="Green R.E."/>
            <person name="Gustincich S."/>
            <person name="Harbers M."/>
            <person name="Hayashi Y."/>
            <person name="Hensch T.K."/>
            <person name="Hirokawa N."/>
            <person name="Hill D."/>
            <person name="Huminiecki L."/>
            <person name="Iacono M."/>
            <person name="Ikeo K."/>
            <person name="Iwama A."/>
            <person name="Ishikawa T."/>
            <person name="Jakt M."/>
            <person name="Kanapin A."/>
            <person name="Katoh M."/>
            <person name="Kawasawa Y."/>
            <person name="Kelso J."/>
            <person name="Kitamura H."/>
            <person name="Kitano H."/>
            <person name="Kollias G."/>
            <person name="Krishnan S.P."/>
            <person name="Kruger A."/>
            <person name="Kummerfeld S.K."/>
            <person name="Kurochkin I.V."/>
            <person name="Lareau L.F."/>
            <person name="Lazarevic D."/>
            <person name="Lipovich L."/>
            <person name="Liu J."/>
            <person name="Liuni S."/>
            <person name="McWilliam S."/>
            <person name="Madan Babu M."/>
            <person name="Madera M."/>
            <person name="Marchionni L."/>
            <person name="Matsuda H."/>
            <person name="Matsuzawa S."/>
            <person name="Miki H."/>
            <person name="Mignone F."/>
            <person name="Miyake S."/>
            <person name="Morris K."/>
            <person name="Mottagui-Tabar S."/>
            <person name="Mulder N."/>
            <person name="Nakano N."/>
            <person name="Nakauchi H."/>
            <person name="Ng P."/>
            <person name="Nilsson R."/>
            <person name="Nishiguchi S."/>
            <person name="Nishikawa S."/>
            <person name="Nori F."/>
            <person name="Ohara O."/>
            <person name="Okazaki Y."/>
            <person name="Orlando V."/>
            <person name="Pang K.C."/>
            <person name="Pavan W.J."/>
            <person name="Pavesi G."/>
            <person name="Pesole G."/>
            <person name="Petrovsky N."/>
            <person name="Piazza S."/>
            <person name="Reed J."/>
            <person name="Reid J.F."/>
            <person name="Ring B.Z."/>
            <person name="Ringwald M."/>
            <person name="Rost B."/>
            <person name="Ruan Y."/>
            <person name="Salzberg S.L."/>
            <person name="Sandelin A."/>
            <person name="Schneider C."/>
            <person name="Schoenbach C."/>
            <person name="Sekiguchi K."/>
            <person name="Semple C.A."/>
            <person name="Seno S."/>
            <person name="Sessa L."/>
            <person name="Sheng Y."/>
            <person name="Shibata Y."/>
            <person name="Shimada H."/>
            <person name="Shimada K."/>
            <person name="Silva D."/>
            <person name="Sinclair B."/>
            <person name="Sperling S."/>
            <person name="Stupka E."/>
            <person name="Sugiura K."/>
            <person name="Sultana R."/>
            <person name="Takenaka Y."/>
            <person name="Taki K."/>
            <person name="Tammoja K."/>
            <person name="Tan S.L."/>
            <person name="Tang S."/>
            <person name="Taylor M.S."/>
            <person name="Tegner J."/>
            <person name="Teichmann S.A."/>
            <person name="Ueda H.R."/>
            <person name="van Nimwegen E."/>
            <person name="Verardo R."/>
            <person name="Wei C.L."/>
            <person name="Yagi K."/>
            <person name="Yamanishi H."/>
            <person name="Zabarovsky E."/>
            <person name="Zhu S."/>
            <person name="Zimmer A."/>
            <person name="Hide W."/>
            <person name="Bult C."/>
            <person name="Grimmond S.M."/>
            <person name="Teasdale R.D."/>
            <person name="Liu E.T."/>
            <person name="Brusic V."/>
            <person name="Quackenbush J."/>
            <person name="Wahlestedt C."/>
            <person name="Mattick J.S."/>
            <person name="Hume D.A."/>
            <person name="Kai C."/>
            <person name="Sasaki D."/>
            <person name="Tomaru Y."/>
            <person name="Fukuda S."/>
            <person name="Kanamori-Katayama M."/>
            <person name="Suzuki M."/>
            <person name="Aoki J."/>
            <person name="Arakawa T."/>
            <person name="Iida J."/>
            <person name="Imamura K."/>
            <person name="Itoh M."/>
            <person name="Kato T."/>
            <person name="Kawaji H."/>
            <person name="Kawagashira N."/>
            <person name="Kawashima T."/>
            <person name="Kojima M."/>
            <person name="Kondo S."/>
            <person name="Konno H."/>
            <person name="Nakano K."/>
            <person name="Ninomiya N."/>
            <person name="Nishio T."/>
            <person name="Okada M."/>
            <person name="Plessy C."/>
            <person name="Shibata K."/>
            <person name="Shiraki T."/>
            <person name="Suzuki S."/>
            <person name="Tagami M."/>
            <person name="Waki K."/>
            <person name="Watahiki A."/>
            <person name="Okamura-Oho Y."/>
            <person name="Suzuki H."/>
            <person name="Kawai J."/>
            <person name="Hayashizaki Y."/>
        </authorList>
    </citation>
    <scope>NUCLEOTIDE SEQUENCE [LARGE SCALE MRNA]</scope>
    <source>
        <strain>C57BL/6J</strain>
        <tissue>Embryo</tissue>
        <tissue>Embryonic stem cell</tissue>
    </source>
</reference>
<reference key="3">
    <citation type="journal article" date="2004" name="Genome Res.">
        <title>The status, quality, and expansion of the NIH full-length cDNA project: the Mammalian Gene Collection (MGC).</title>
        <authorList>
            <consortium name="The MGC Project Team"/>
        </authorList>
    </citation>
    <scope>NUCLEOTIDE SEQUENCE [LARGE SCALE MRNA]</scope>
</reference>
<reference key="4">
    <citation type="journal article" date="2015" name="Cell Rep.">
        <title>Regulation of hematopoiesis and methionine homeostasis by mTORC1 inhibitor NPRL2.</title>
        <authorList>
            <person name="Dutchak P.A."/>
            <person name="Laxman S."/>
            <person name="Estill S.J."/>
            <person name="Wang C."/>
            <person name="Wang Y."/>
            <person name="Wang Y."/>
            <person name="Bulut G.B."/>
            <person name="Gao J."/>
            <person name="Huang L.J."/>
            <person name="Tu B.P."/>
        </authorList>
    </citation>
    <scope>FUNCTION</scope>
    <scope>DISRUPTION PHENOTYPE</scope>
</reference>
<reference key="5">
    <citation type="journal article" date="2018" name="Cell Rep.">
        <title>Loss of a Negative Regulator of mTORC1 Induces Aerobic Glycolysis and Altered Fiber Composition in Skeletal Muscle.</title>
        <authorList>
            <person name="Dutchak P.A."/>
            <person name="Estill-Terpack S.J."/>
            <person name="Plec A.A."/>
            <person name="Zhao X."/>
            <person name="Yang C."/>
            <person name="Chen J."/>
            <person name="Ko B."/>
            <person name="Deberardinis R.J."/>
            <person name="Yu Y."/>
            <person name="Tu B.P."/>
        </authorList>
    </citation>
    <scope>FUNCTION</scope>
    <scope>DISRUPTION PHENOTYPE</scope>
</reference>
<reference key="6">
    <citation type="journal article" date="2023" name="Cell Metab.">
        <title>PRMT1 orchestrates with SAMTOR to govern mTORC1 methionine sensing via Arg-methylation of NPRL2.</title>
        <authorList>
            <person name="Jiang C."/>
            <person name="Liu J."/>
            <person name="He S."/>
            <person name="Xu W."/>
            <person name="Huang R."/>
            <person name="Pan W."/>
            <person name="Li X."/>
            <person name="Dai X."/>
            <person name="Guo J."/>
            <person name="Zhang T."/>
            <person name="Inuzuka H."/>
            <person name="Wang P."/>
            <person name="Asara J.M."/>
            <person name="Xiao J."/>
            <person name="Wei W."/>
        </authorList>
    </citation>
    <scope>FUNCTION</scope>
    <scope>METHYLATION AT ARG-78</scope>
</reference>
<name>NPRL2_MOUSE</name>
<gene>
    <name evidence="7" type="primary">Nprl2</name>
</gene>
<accession>Q9WUE4</accession>
<organism>
    <name type="scientific">Mus musculus</name>
    <name type="common">Mouse</name>
    <dbReference type="NCBI Taxonomy" id="10090"/>
    <lineage>
        <taxon>Eukaryota</taxon>
        <taxon>Metazoa</taxon>
        <taxon>Chordata</taxon>
        <taxon>Craniata</taxon>
        <taxon>Vertebrata</taxon>
        <taxon>Euteleostomi</taxon>
        <taxon>Mammalia</taxon>
        <taxon>Eutheria</taxon>
        <taxon>Euarchontoglires</taxon>
        <taxon>Glires</taxon>
        <taxon>Rodentia</taxon>
        <taxon>Myomorpha</taxon>
        <taxon>Muroidea</taxon>
        <taxon>Muridae</taxon>
        <taxon>Murinae</taxon>
        <taxon>Mus</taxon>
        <taxon>Mus</taxon>
    </lineage>
</organism>
<keyword id="KW-0343">GTPase activation</keyword>
<keyword id="KW-1017">Isopeptide bond</keyword>
<keyword id="KW-0458">Lysosome</keyword>
<keyword id="KW-0472">Membrane</keyword>
<keyword id="KW-0488">Methylation</keyword>
<keyword id="KW-1185">Reference proteome</keyword>
<keyword id="KW-0043">Tumor suppressor</keyword>
<keyword id="KW-0832">Ubl conjugation</keyword>
<feature type="chain" id="PRO_0000213320" description="GATOR1 complex protein NPRL2">
    <location>
        <begin position="1"/>
        <end position="380"/>
    </location>
</feature>
<feature type="region of interest" description="Interaction with PDPK1" evidence="1">
    <location>
        <begin position="1"/>
        <end position="133"/>
    </location>
</feature>
<feature type="binding site" evidence="1">
    <location>
        <position position="78"/>
    </location>
    <ligand>
        <name>GDP</name>
        <dbReference type="ChEBI" id="CHEBI:58189"/>
    </ligand>
</feature>
<feature type="site" description="Arginine finger" evidence="1">
    <location>
        <position position="124"/>
    </location>
</feature>
<feature type="modified residue" description="Asymmetric dimethylarginine" evidence="4">
    <location>
        <position position="78"/>
    </location>
</feature>
<feature type="cross-link" description="Glycyl lysine isopeptide (Lys-Gly) (interchain with G-Cter in ubiquitin)" evidence="1">
    <location>
        <position position="158"/>
    </location>
</feature>
<feature type="cross-link" description="Glycyl lysine isopeptide (Lys-Gly) (interchain with G-Cter in ubiquitin)" evidence="1">
    <location>
        <position position="357"/>
    </location>
</feature>
<protein>
    <recommendedName>
        <fullName evidence="5">GATOR1 complex protein NPRL2</fullName>
    </recommendedName>
    <alternativeName>
        <fullName evidence="6">Gene 21 protein</fullName>
        <shortName evidence="6">G21 protein</shortName>
    </alternativeName>
    <alternativeName>
        <fullName evidence="7">Nitrogen permease regulator 2-like protein</fullName>
        <shortName evidence="7">NPR2-like protein</shortName>
    </alternativeName>
</protein>
<dbReference type="EMBL" id="AF131207">
    <property type="protein sequence ID" value="AAD33474.1"/>
    <property type="molecule type" value="mRNA"/>
</dbReference>
<dbReference type="EMBL" id="AK013299">
    <property type="protein sequence ID" value="BAB28777.1"/>
    <property type="molecule type" value="mRNA"/>
</dbReference>
<dbReference type="EMBL" id="AK010331">
    <property type="protein sequence ID" value="BAB26858.1"/>
    <property type="molecule type" value="mRNA"/>
</dbReference>
<dbReference type="EMBL" id="BC026548">
    <property type="protein sequence ID" value="AAH26548.1"/>
    <property type="molecule type" value="mRNA"/>
</dbReference>
<dbReference type="CCDS" id="CCDS23492.1"/>
<dbReference type="RefSeq" id="NP_061367.1">
    <property type="nucleotide sequence ID" value="NM_018879.2"/>
</dbReference>
<dbReference type="SMR" id="Q9WUE4"/>
<dbReference type="FunCoup" id="Q9WUE4">
    <property type="interactions" value="821"/>
</dbReference>
<dbReference type="STRING" id="10090.ENSMUSP00000010201"/>
<dbReference type="iPTMnet" id="Q9WUE4"/>
<dbReference type="PhosphoSitePlus" id="Q9WUE4"/>
<dbReference type="PaxDb" id="10090-ENSMUSP00000010201"/>
<dbReference type="ProteomicsDB" id="293714"/>
<dbReference type="Pumba" id="Q9WUE4"/>
<dbReference type="Antibodypedia" id="30939">
    <property type="antibodies" value="284 antibodies from 33 providers"/>
</dbReference>
<dbReference type="DNASU" id="56032"/>
<dbReference type="Ensembl" id="ENSMUST00000010201.9">
    <property type="protein sequence ID" value="ENSMUSP00000010201.4"/>
    <property type="gene ID" value="ENSMUSG00000010057.9"/>
</dbReference>
<dbReference type="GeneID" id="56032"/>
<dbReference type="KEGG" id="mmu:56032"/>
<dbReference type="UCSC" id="uc009rln.2">
    <property type="organism name" value="mouse"/>
</dbReference>
<dbReference type="AGR" id="MGI:1914482"/>
<dbReference type="CTD" id="10641"/>
<dbReference type="MGI" id="MGI:1914482">
    <property type="gene designation" value="Nprl2"/>
</dbReference>
<dbReference type="VEuPathDB" id="HostDB:ENSMUSG00000010057"/>
<dbReference type="eggNOG" id="KOG3789">
    <property type="taxonomic scope" value="Eukaryota"/>
</dbReference>
<dbReference type="GeneTree" id="ENSGT00390000001414"/>
<dbReference type="HOGENOM" id="CLU_014995_0_0_1"/>
<dbReference type="InParanoid" id="Q9WUE4"/>
<dbReference type="OMA" id="IVMHKPD"/>
<dbReference type="OrthoDB" id="338854at2759"/>
<dbReference type="PhylomeDB" id="Q9WUE4"/>
<dbReference type="TreeFam" id="TF106159"/>
<dbReference type="Reactome" id="R-MMU-9639288">
    <property type="pathway name" value="Amino acids regulate mTORC1"/>
</dbReference>
<dbReference type="BioGRID-ORCS" id="56032">
    <property type="hits" value="9 hits in 80 CRISPR screens"/>
</dbReference>
<dbReference type="ChiTaRS" id="Nprl2">
    <property type="organism name" value="mouse"/>
</dbReference>
<dbReference type="PRO" id="PR:Q9WUE4"/>
<dbReference type="Proteomes" id="UP000000589">
    <property type="component" value="Chromosome 9"/>
</dbReference>
<dbReference type="RNAct" id="Q9WUE4">
    <property type="molecule type" value="protein"/>
</dbReference>
<dbReference type="Bgee" id="ENSMUSG00000010057">
    <property type="expression patterns" value="Expressed in interventricular septum and 248 other cell types or tissues"/>
</dbReference>
<dbReference type="ExpressionAtlas" id="Q9WUE4">
    <property type="expression patterns" value="baseline and differential"/>
</dbReference>
<dbReference type="GO" id="GO:1990130">
    <property type="term" value="C:GATOR1 complex"/>
    <property type="evidence" value="ECO:0007669"/>
    <property type="project" value="Ensembl"/>
</dbReference>
<dbReference type="GO" id="GO:0005765">
    <property type="term" value="C:lysosomal membrane"/>
    <property type="evidence" value="ECO:0000250"/>
    <property type="project" value="UniProtKB"/>
</dbReference>
<dbReference type="GO" id="GO:0005096">
    <property type="term" value="F:GTPase activator activity"/>
    <property type="evidence" value="ECO:0000250"/>
    <property type="project" value="UniProtKB"/>
</dbReference>
<dbReference type="GO" id="GO:0034198">
    <property type="term" value="P:cellular response to amino acid starvation"/>
    <property type="evidence" value="ECO:0000315"/>
    <property type="project" value="UniProtKB"/>
</dbReference>
<dbReference type="GO" id="GO:1904262">
    <property type="term" value="P:negative regulation of TORC1 signaling"/>
    <property type="evidence" value="ECO:0000315"/>
    <property type="project" value="UniProtKB"/>
</dbReference>
<dbReference type="InterPro" id="IPR009348">
    <property type="entry name" value="NPR2-like"/>
</dbReference>
<dbReference type="PANTHER" id="PTHR12991:SF10">
    <property type="entry name" value="GATOR COMPLEX PROTEIN NPRL2"/>
    <property type="match status" value="1"/>
</dbReference>
<dbReference type="PANTHER" id="PTHR12991">
    <property type="entry name" value="NITROGEN PERMEASE REGULATOR 2/TUMOR SUPPRESSOR CANDIDATE 4"/>
    <property type="match status" value="1"/>
</dbReference>
<dbReference type="Pfam" id="PF06218">
    <property type="entry name" value="NPR2"/>
    <property type="match status" value="2"/>
</dbReference>